<name>VKTG9_CYRSC</name>
<proteinExistence type="inferred from homology"/>
<evidence type="ECO:0000250" key="1"/>
<evidence type="ECO:0000250" key="2">
    <source>
        <dbReference type="UniProtKB" id="P68425"/>
    </source>
</evidence>
<evidence type="ECO:0000255" key="3"/>
<evidence type="ECO:0000255" key="4">
    <source>
        <dbReference type="PROSITE-ProRule" id="PRU00031"/>
    </source>
</evidence>
<evidence type="ECO:0000305" key="5"/>
<evidence type="ECO:0000305" key="6">
    <source>
    </source>
</evidence>
<feature type="signal peptide" evidence="3">
    <location>
        <begin position="1"/>
        <end position="27"/>
    </location>
</feature>
<feature type="propeptide" id="PRO_0000380158" evidence="1">
    <location>
        <begin position="28"/>
        <end position="33"/>
    </location>
</feature>
<feature type="chain" id="PRO_0000380159" description="Kunitz-type U15-theraphotoxin-Hs1c">
    <location>
        <begin position="34"/>
        <end position="88"/>
    </location>
</feature>
<feature type="domain" description="BPTI/Kunitz inhibitor" evidence="4">
    <location>
        <begin position="37"/>
        <end position="85"/>
    </location>
</feature>
<feature type="site" description="Reactive bond for chymotrypsin" evidence="1">
    <location>
        <begin position="47"/>
        <end position="48"/>
    </location>
</feature>
<feature type="disulfide bond" evidence="4">
    <location>
        <begin position="37"/>
        <end position="85"/>
    </location>
</feature>
<feature type="disulfide bond" evidence="4">
    <location>
        <begin position="60"/>
        <end position="81"/>
    </location>
</feature>
<reference key="1">
    <citation type="journal article" date="2008" name="Peptides">
        <title>Genomic organization and cloning of novel genes encoding toxin-like peptides of three superfamilies from the spider Orinithoctonus huwena.</title>
        <authorList>
            <person name="Jiang L."/>
            <person name="Chen J."/>
            <person name="Peng L."/>
            <person name="Zhang Y."/>
            <person name="Xiong X."/>
            <person name="Liang S."/>
        </authorList>
    </citation>
    <scope>NUCLEOTIDE SEQUENCE [GENOMIC DNA]</scope>
</reference>
<organism>
    <name type="scientific">Cyriopagopus schmidti</name>
    <name type="common">Chinese bird spider</name>
    <name type="synonym">Haplopelma schmidti</name>
    <dbReference type="NCBI Taxonomy" id="29017"/>
    <lineage>
        <taxon>Eukaryota</taxon>
        <taxon>Metazoa</taxon>
        <taxon>Ecdysozoa</taxon>
        <taxon>Arthropoda</taxon>
        <taxon>Chelicerata</taxon>
        <taxon>Arachnida</taxon>
        <taxon>Araneae</taxon>
        <taxon>Mygalomorphae</taxon>
        <taxon>Theraphosidae</taxon>
        <taxon>Cyriopagopus</taxon>
    </lineage>
</organism>
<protein>
    <recommendedName>
        <fullName>Kunitz-type U15-theraphotoxin-Hs1c</fullName>
        <shortName>U15-TRTX-Hs1c</shortName>
    </recommendedName>
    <alternativeName>
        <fullName>Kunitz-type serine protease inhibitor huwentoxin-11g9</fullName>
        <shortName>HW11g9</shortName>
    </alternativeName>
</protein>
<sequence length="88" mass="9789">MGTARFLSAVLLLSVLLMVTFPALLSAEYHDGRVDICSLPPDSGDCLRFFEMWYFDGTTCTKFVYGGYGGNDNRFPTEKACMKRCAKA</sequence>
<keyword id="KW-1015">Disulfide bond</keyword>
<keyword id="KW-0646">Protease inhibitor</keyword>
<keyword id="KW-0964">Secreted</keyword>
<keyword id="KW-0722">Serine protease inhibitor</keyword>
<keyword id="KW-0732">Signal</keyword>
<comment type="function">
    <text evidence="2">Serine protease inhibitor that inhibits trypsin at a molar ratio of 1:1.</text>
</comment>
<comment type="subcellular location">
    <subcellularLocation>
        <location evidence="6">Secreted</location>
    </subcellularLocation>
</comment>
<comment type="tissue specificity">
    <text evidence="6">Expressed by the venom gland.</text>
</comment>
<comment type="similarity">
    <text evidence="5">Belongs to the venom Kunitz-type family. 03 (sub-Kunitz) subfamily.</text>
</comment>
<dbReference type="EMBL" id="EU635748">
    <property type="protein sequence ID" value="ACD01240.1"/>
    <property type="molecule type" value="Genomic_DNA"/>
</dbReference>
<dbReference type="SMR" id="B2ZBC0"/>
<dbReference type="ArachnoServer" id="AS000436">
    <property type="toxin name" value="U15-theraphotoxin-Hs1c"/>
</dbReference>
<dbReference type="GO" id="GO:0005615">
    <property type="term" value="C:extracellular space"/>
    <property type="evidence" value="ECO:0007669"/>
    <property type="project" value="TreeGrafter"/>
</dbReference>
<dbReference type="GO" id="GO:0015459">
    <property type="term" value="F:potassium channel regulator activity"/>
    <property type="evidence" value="ECO:0007669"/>
    <property type="project" value="UniProtKB-KW"/>
</dbReference>
<dbReference type="GO" id="GO:0004867">
    <property type="term" value="F:serine-type endopeptidase inhibitor activity"/>
    <property type="evidence" value="ECO:0007669"/>
    <property type="project" value="UniProtKB-KW"/>
</dbReference>
<dbReference type="GO" id="GO:0090729">
    <property type="term" value="F:toxin activity"/>
    <property type="evidence" value="ECO:0007669"/>
    <property type="project" value="UniProtKB-KW"/>
</dbReference>
<dbReference type="GO" id="GO:0044562">
    <property type="term" value="P:envenomation resulting in negative regulation of voltage-gated potassium channel activity in another organism"/>
    <property type="evidence" value="ECO:0007669"/>
    <property type="project" value="UniProtKB-ARBA"/>
</dbReference>
<dbReference type="CDD" id="cd22598">
    <property type="entry name" value="Kunitz_huwentoxin"/>
    <property type="match status" value="1"/>
</dbReference>
<dbReference type="FunFam" id="4.10.410.10:FF:000020">
    <property type="entry name" value="Collagen, type VI, alpha 3"/>
    <property type="match status" value="1"/>
</dbReference>
<dbReference type="Gene3D" id="4.10.410.10">
    <property type="entry name" value="Pancreatic trypsin inhibitor Kunitz domain"/>
    <property type="match status" value="1"/>
</dbReference>
<dbReference type="InterPro" id="IPR002223">
    <property type="entry name" value="Kunitz_BPTI"/>
</dbReference>
<dbReference type="InterPro" id="IPR036880">
    <property type="entry name" value="Kunitz_BPTI_sf"/>
</dbReference>
<dbReference type="InterPro" id="IPR050098">
    <property type="entry name" value="TFPI/VKTCI-like"/>
</dbReference>
<dbReference type="PANTHER" id="PTHR10083">
    <property type="entry name" value="KUNITZ-TYPE PROTEASE INHIBITOR-RELATED"/>
    <property type="match status" value="1"/>
</dbReference>
<dbReference type="PANTHER" id="PTHR10083:SF328">
    <property type="entry name" value="TISSUE FACTOR PATHWAY INHIBITOR"/>
    <property type="match status" value="1"/>
</dbReference>
<dbReference type="Pfam" id="PF00014">
    <property type="entry name" value="Kunitz_BPTI"/>
    <property type="match status" value="1"/>
</dbReference>
<dbReference type="PRINTS" id="PR00759">
    <property type="entry name" value="BASICPTASE"/>
</dbReference>
<dbReference type="SMART" id="SM00131">
    <property type="entry name" value="KU"/>
    <property type="match status" value="1"/>
</dbReference>
<dbReference type="SUPFAM" id="SSF57362">
    <property type="entry name" value="BPTI-like"/>
    <property type="match status" value="1"/>
</dbReference>
<dbReference type="PROSITE" id="PS50279">
    <property type="entry name" value="BPTI_KUNITZ_2"/>
    <property type="match status" value="1"/>
</dbReference>
<accession>B2ZBC0</accession>